<organism>
    <name type="scientific">Blepharodera discoidalis</name>
    <name type="common">Cockroach</name>
    <dbReference type="NCBI Taxonomy" id="521524"/>
    <lineage>
        <taxon>Eukaryota</taxon>
        <taxon>Metazoa</taxon>
        <taxon>Ecdysozoa</taxon>
        <taxon>Arthropoda</taxon>
        <taxon>Hexapoda</taxon>
        <taxon>Insecta</taxon>
        <taxon>Pterygota</taxon>
        <taxon>Neoptera</taxon>
        <taxon>Polyneoptera</taxon>
        <taxon>Dictyoptera</taxon>
        <taxon>Blattodea</taxon>
        <taxon>Blaberoidea</taxon>
        <taxon>Blaberidae</taxon>
        <taxon>Epilamprinae</taxon>
        <taxon>Blepharodera</taxon>
    </lineage>
</organism>
<protein>
    <recommendedName>
        <fullName evidence="3">Periviscerokinin-1</fullName>
        <shortName evidence="3">BleDi-PVK-1</shortName>
    </recommendedName>
</protein>
<evidence type="ECO:0000255" key="1"/>
<evidence type="ECO:0000269" key="2">
    <source>
    </source>
</evidence>
<evidence type="ECO:0000303" key="3">
    <source>
    </source>
</evidence>
<evidence type="ECO:0000305" key="4"/>
<comment type="function">
    <text evidence="4">Mediates visceral muscle contractile activity (myotropic activity).</text>
</comment>
<comment type="subcellular location">
    <subcellularLocation>
        <location evidence="4">Secreted</location>
    </subcellularLocation>
</comment>
<comment type="similarity">
    <text evidence="1">Belongs to the periviscerokinin family.</text>
</comment>
<feature type="peptide" id="PRO_0000378732" description="Periviscerokinin-1" evidence="2">
    <location>
        <begin position="1"/>
        <end position="11"/>
    </location>
</feature>
<feature type="modified residue" description="Threonine amide" evidence="2">
    <location>
        <position position="11"/>
    </location>
</feature>
<keyword id="KW-0027">Amidation</keyword>
<keyword id="KW-0903">Direct protein sequencing</keyword>
<keyword id="KW-0527">Neuropeptide</keyword>
<keyword id="KW-0964">Secreted</keyword>
<dbReference type="GO" id="GO:0005576">
    <property type="term" value="C:extracellular region"/>
    <property type="evidence" value="ECO:0007669"/>
    <property type="project" value="UniProtKB-SubCell"/>
</dbReference>
<dbReference type="GO" id="GO:0007218">
    <property type="term" value="P:neuropeptide signaling pathway"/>
    <property type="evidence" value="ECO:0007669"/>
    <property type="project" value="UniProtKB-KW"/>
</dbReference>
<dbReference type="InterPro" id="IPR013231">
    <property type="entry name" value="Periviscerokinin"/>
</dbReference>
<dbReference type="Pfam" id="PF08259">
    <property type="entry name" value="Periviscerokin"/>
    <property type="match status" value="1"/>
</dbReference>
<accession>P85561</accession>
<reference evidence="4" key="1">
    <citation type="journal article" date="2009" name="BMC Evol. Biol.">
        <title>A proteomic approach for studying insect phylogeny: CAPA peptides of ancient insect taxa (Dictyoptera, Blattoptera) as a test case.</title>
        <authorList>
            <person name="Roth S."/>
            <person name="Fromm B."/>
            <person name="Gaede G."/>
            <person name="Predel R."/>
        </authorList>
    </citation>
    <scope>PROTEIN SEQUENCE</scope>
    <scope>AMIDATION AT THR-11</scope>
    <source>
        <tissue evidence="2">Abdominal perisympathetic organs</tissue>
    </source>
</reference>
<sequence length="11" mass="1105">GSTGLIPFGRT</sequence>
<name>PVK1_BLEDI</name>
<proteinExistence type="evidence at protein level"/>